<accession>A2CG49</accession>
<accession>A2CG50</accession>
<accession>A2CG51</accession>
<accession>A2CG52</accession>
<accession>A2CG53</accession>
<accession>B2RXR5</accession>
<accession>D3Z559</accession>
<accession>Q3TXY8</accession>
<accession>Q3TYL1</accession>
<accession>Q3UTA5</accession>
<accession>Q8BTT9</accession>
<accession>Q8C4Q2</accession>
<accession>Q9CVA9</accession>
<organism>
    <name type="scientific">Mus musculus</name>
    <name type="common">Mouse</name>
    <dbReference type="NCBI Taxonomy" id="10090"/>
    <lineage>
        <taxon>Eukaryota</taxon>
        <taxon>Metazoa</taxon>
        <taxon>Chordata</taxon>
        <taxon>Craniata</taxon>
        <taxon>Vertebrata</taxon>
        <taxon>Euteleostomi</taxon>
        <taxon>Mammalia</taxon>
        <taxon>Eutheria</taxon>
        <taxon>Euarchontoglires</taxon>
        <taxon>Glires</taxon>
        <taxon>Rodentia</taxon>
        <taxon>Myomorpha</taxon>
        <taxon>Muroidea</taxon>
        <taxon>Muridae</taxon>
        <taxon>Murinae</taxon>
        <taxon>Mus</taxon>
        <taxon>Mus</taxon>
    </lineage>
</organism>
<reference evidence="18 19" key="1">
    <citation type="journal article" date="2005" name="Science">
        <title>The transcriptional landscape of the mammalian genome.</title>
        <authorList>
            <person name="Carninci P."/>
            <person name="Kasukawa T."/>
            <person name="Katayama S."/>
            <person name="Gough J."/>
            <person name="Frith M.C."/>
            <person name="Maeda N."/>
            <person name="Oyama R."/>
            <person name="Ravasi T."/>
            <person name="Lenhard B."/>
            <person name="Wells C."/>
            <person name="Kodzius R."/>
            <person name="Shimokawa K."/>
            <person name="Bajic V.B."/>
            <person name="Brenner S.E."/>
            <person name="Batalov S."/>
            <person name="Forrest A.R."/>
            <person name="Zavolan M."/>
            <person name="Davis M.J."/>
            <person name="Wilming L.G."/>
            <person name="Aidinis V."/>
            <person name="Allen J.E."/>
            <person name="Ambesi-Impiombato A."/>
            <person name="Apweiler R."/>
            <person name="Aturaliya R.N."/>
            <person name="Bailey T.L."/>
            <person name="Bansal M."/>
            <person name="Baxter L."/>
            <person name="Beisel K.W."/>
            <person name="Bersano T."/>
            <person name="Bono H."/>
            <person name="Chalk A.M."/>
            <person name="Chiu K.P."/>
            <person name="Choudhary V."/>
            <person name="Christoffels A."/>
            <person name="Clutterbuck D.R."/>
            <person name="Crowe M.L."/>
            <person name="Dalla E."/>
            <person name="Dalrymple B.P."/>
            <person name="de Bono B."/>
            <person name="Della Gatta G."/>
            <person name="di Bernardo D."/>
            <person name="Down T."/>
            <person name="Engstrom P."/>
            <person name="Fagiolini M."/>
            <person name="Faulkner G."/>
            <person name="Fletcher C.F."/>
            <person name="Fukushima T."/>
            <person name="Furuno M."/>
            <person name="Futaki S."/>
            <person name="Gariboldi M."/>
            <person name="Georgii-Hemming P."/>
            <person name="Gingeras T.R."/>
            <person name="Gojobori T."/>
            <person name="Green R.E."/>
            <person name="Gustincich S."/>
            <person name="Harbers M."/>
            <person name="Hayashi Y."/>
            <person name="Hensch T.K."/>
            <person name="Hirokawa N."/>
            <person name="Hill D."/>
            <person name="Huminiecki L."/>
            <person name="Iacono M."/>
            <person name="Ikeo K."/>
            <person name="Iwama A."/>
            <person name="Ishikawa T."/>
            <person name="Jakt M."/>
            <person name="Kanapin A."/>
            <person name="Katoh M."/>
            <person name="Kawasawa Y."/>
            <person name="Kelso J."/>
            <person name="Kitamura H."/>
            <person name="Kitano H."/>
            <person name="Kollias G."/>
            <person name="Krishnan S.P."/>
            <person name="Kruger A."/>
            <person name="Kummerfeld S.K."/>
            <person name="Kurochkin I.V."/>
            <person name="Lareau L.F."/>
            <person name="Lazarevic D."/>
            <person name="Lipovich L."/>
            <person name="Liu J."/>
            <person name="Liuni S."/>
            <person name="McWilliam S."/>
            <person name="Madan Babu M."/>
            <person name="Madera M."/>
            <person name="Marchionni L."/>
            <person name="Matsuda H."/>
            <person name="Matsuzawa S."/>
            <person name="Miki H."/>
            <person name="Mignone F."/>
            <person name="Miyake S."/>
            <person name="Morris K."/>
            <person name="Mottagui-Tabar S."/>
            <person name="Mulder N."/>
            <person name="Nakano N."/>
            <person name="Nakauchi H."/>
            <person name="Ng P."/>
            <person name="Nilsson R."/>
            <person name="Nishiguchi S."/>
            <person name="Nishikawa S."/>
            <person name="Nori F."/>
            <person name="Ohara O."/>
            <person name="Okazaki Y."/>
            <person name="Orlando V."/>
            <person name="Pang K.C."/>
            <person name="Pavan W.J."/>
            <person name="Pavesi G."/>
            <person name="Pesole G."/>
            <person name="Petrovsky N."/>
            <person name="Piazza S."/>
            <person name="Reed J."/>
            <person name="Reid J.F."/>
            <person name="Ring B.Z."/>
            <person name="Ringwald M."/>
            <person name="Rost B."/>
            <person name="Ruan Y."/>
            <person name="Salzberg S.L."/>
            <person name="Sandelin A."/>
            <person name="Schneider C."/>
            <person name="Schoenbach C."/>
            <person name="Sekiguchi K."/>
            <person name="Semple C.A."/>
            <person name="Seno S."/>
            <person name="Sessa L."/>
            <person name="Sheng Y."/>
            <person name="Shibata Y."/>
            <person name="Shimada H."/>
            <person name="Shimada K."/>
            <person name="Silva D."/>
            <person name="Sinclair B."/>
            <person name="Sperling S."/>
            <person name="Stupka E."/>
            <person name="Sugiura K."/>
            <person name="Sultana R."/>
            <person name="Takenaka Y."/>
            <person name="Taki K."/>
            <person name="Tammoja K."/>
            <person name="Tan S.L."/>
            <person name="Tang S."/>
            <person name="Taylor M.S."/>
            <person name="Tegner J."/>
            <person name="Teichmann S.A."/>
            <person name="Ueda H.R."/>
            <person name="van Nimwegen E."/>
            <person name="Verardo R."/>
            <person name="Wei C.L."/>
            <person name="Yagi K."/>
            <person name="Yamanishi H."/>
            <person name="Zabarovsky E."/>
            <person name="Zhu S."/>
            <person name="Zimmer A."/>
            <person name="Hide W."/>
            <person name="Bult C."/>
            <person name="Grimmond S.M."/>
            <person name="Teasdale R.D."/>
            <person name="Liu E.T."/>
            <person name="Brusic V."/>
            <person name="Quackenbush J."/>
            <person name="Wahlestedt C."/>
            <person name="Mattick J.S."/>
            <person name="Hume D.A."/>
            <person name="Kai C."/>
            <person name="Sasaki D."/>
            <person name="Tomaru Y."/>
            <person name="Fukuda S."/>
            <person name="Kanamori-Katayama M."/>
            <person name="Suzuki M."/>
            <person name="Aoki J."/>
            <person name="Arakawa T."/>
            <person name="Iida J."/>
            <person name="Imamura K."/>
            <person name="Itoh M."/>
            <person name="Kato T."/>
            <person name="Kawaji H."/>
            <person name="Kawagashira N."/>
            <person name="Kawashima T."/>
            <person name="Kojima M."/>
            <person name="Kondo S."/>
            <person name="Konno H."/>
            <person name="Nakano K."/>
            <person name="Ninomiya N."/>
            <person name="Nishio T."/>
            <person name="Okada M."/>
            <person name="Plessy C."/>
            <person name="Shibata K."/>
            <person name="Shiraki T."/>
            <person name="Suzuki S."/>
            <person name="Tagami M."/>
            <person name="Waki K."/>
            <person name="Watahiki A."/>
            <person name="Okamura-Oho Y."/>
            <person name="Suzuki H."/>
            <person name="Kawai J."/>
            <person name="Hayashizaki Y."/>
        </authorList>
    </citation>
    <scope>NUCLEOTIDE SEQUENCE [LARGE SCALE MRNA] (ISOFORMS 3; 4; 5 AND 6)</scope>
    <scope>NUCLEOTIDE SEQUENCE [LARGE SCALE MRNA] OF 2108-2964 (ISOFORM 2)</scope>
    <source>
        <strain evidence="19">C57BL/6J</strain>
        <strain evidence="21">NOD</strain>
        <tissue evidence="22">Egg</tissue>
        <tissue evidence="20">Embryonic head</tissue>
        <tissue evidence="19">Stomach</tissue>
        <tissue evidence="21">Thymus</tissue>
        <tissue evidence="23">Visual cortex</tissue>
    </source>
</reference>
<reference key="2">
    <citation type="journal article" date="2009" name="PLoS Biol.">
        <title>Lineage-specific biology revealed by a finished genome assembly of the mouse.</title>
        <authorList>
            <person name="Church D.M."/>
            <person name="Goodstadt L."/>
            <person name="Hillier L.W."/>
            <person name="Zody M.C."/>
            <person name="Goldstein S."/>
            <person name="She X."/>
            <person name="Bult C.J."/>
            <person name="Agarwala R."/>
            <person name="Cherry J.L."/>
            <person name="DiCuccio M."/>
            <person name="Hlavina W."/>
            <person name="Kapustin Y."/>
            <person name="Meric P."/>
            <person name="Maglott D."/>
            <person name="Birtle Z."/>
            <person name="Marques A.C."/>
            <person name="Graves T."/>
            <person name="Zhou S."/>
            <person name="Teague B."/>
            <person name="Potamousis K."/>
            <person name="Churas C."/>
            <person name="Place M."/>
            <person name="Herschleb J."/>
            <person name="Runnheim R."/>
            <person name="Forrest D."/>
            <person name="Amos-Landgraf J."/>
            <person name="Schwartz D.C."/>
            <person name="Cheng Z."/>
            <person name="Lindblad-Toh K."/>
            <person name="Eichler E.E."/>
            <person name="Ponting C.P."/>
        </authorList>
    </citation>
    <scope>NUCLEOTIDE SEQUENCE [LARGE SCALE GENOMIC DNA]</scope>
</reference>
<reference key="3">
    <citation type="journal article" date="2004" name="Genome Res.">
        <title>The status, quality, and expansion of the NIH full-length cDNA project: the Mammalian Gene Collection (MGC).</title>
        <authorList>
            <consortium name="The MGC Project Team"/>
        </authorList>
    </citation>
    <scope>NUCLEOTIDE SEQUENCE [LARGE SCALE MRNA] (ISOFORM 9)</scope>
    <source>
        <tissue>Brain</tissue>
    </source>
</reference>
<reference evidence="24" key="4">
    <citation type="submission" date="2009-01" db="UniProtKB">
        <authorList>
            <person name="Lubec G."/>
            <person name="Sunyer B."/>
            <person name="Chen W.-Q."/>
        </authorList>
    </citation>
    <scope>PROTEIN SEQUENCE OF 2034-2042</scope>
    <scope>IDENTIFICATION BY MASS SPECTROMETRY</scope>
    <source>
        <strain>OF1</strain>
        <tissue>Hippocampus</tissue>
    </source>
</reference>
<reference key="5">
    <citation type="journal article" date="2007" name="Proc. Natl. Acad. Sci. U.S.A.">
        <title>Large-scale phosphorylation analysis of mouse liver.</title>
        <authorList>
            <person name="Villen J."/>
            <person name="Beausoleil S.A."/>
            <person name="Gerber S.A."/>
            <person name="Gygi S.P."/>
        </authorList>
    </citation>
    <scope>PHOSPHORYLATION [LARGE SCALE ANALYSIS] AT SER-1722 AND SER-1771</scope>
    <scope>IDENTIFICATION BY MASS SPECTROMETRY [LARGE SCALE ANALYSIS]</scope>
    <source>
        <tissue>Liver</tissue>
    </source>
</reference>
<reference key="6">
    <citation type="journal article" date="2010" name="Cell">
        <title>A tissue-specific atlas of mouse protein phosphorylation and expression.</title>
        <authorList>
            <person name="Huttlin E.L."/>
            <person name="Jedrychowski M.P."/>
            <person name="Elias J.E."/>
            <person name="Goswami T."/>
            <person name="Rad R."/>
            <person name="Beausoleil S.A."/>
            <person name="Villen J."/>
            <person name="Haas W."/>
            <person name="Sowa M.E."/>
            <person name="Gygi S.P."/>
        </authorList>
    </citation>
    <scope>PHOSPHORYLATION [LARGE SCALE ANALYSIS] AT SER-1722; SER-1771; SER-1789; THR-1881 AND THR-1884</scope>
    <scope>IDENTIFICATION BY MASS SPECTROMETRY [LARGE SCALE ANALYSIS]</scope>
    <source>
        <tissue>Brain</tissue>
        <tissue>Heart</tissue>
        <tissue>Kidney</tissue>
        <tissue>Lung</tissue>
        <tissue>Spleen</tissue>
    </source>
</reference>
<gene>
    <name evidence="25" type="primary">Kalrn</name>
</gene>
<protein>
    <recommendedName>
        <fullName evidence="4">Kalirin</fullName>
        <ecNumber>2.7.11.1</ecNumber>
    </recommendedName>
    <alternativeName>
        <fullName>Protein Duo</fullName>
    </alternativeName>
    <alternativeName>
        <fullName>Serine/threonine-protein kinase with Dbl- and pleckstrin homology domain</fullName>
    </alternativeName>
</protein>
<name>KALRN_MOUSE</name>
<comment type="function">
    <text evidence="4">Promotes the exchange of GDP by GTP. Activates specific Rho GTPase family members, thereby inducing various signaling mechanisms that regulate neuronal shape, growth, and plasticity, through their effects on the actin cytoskeleton. Induces lamellipodia independent of its GEF activity (By similarity).</text>
</comment>
<comment type="catalytic activity">
    <reaction evidence="2">
        <text>L-seryl-[protein] + ATP = O-phospho-L-seryl-[protein] + ADP + H(+)</text>
        <dbReference type="Rhea" id="RHEA:17989"/>
        <dbReference type="Rhea" id="RHEA-COMP:9863"/>
        <dbReference type="Rhea" id="RHEA-COMP:11604"/>
        <dbReference type="ChEBI" id="CHEBI:15378"/>
        <dbReference type="ChEBI" id="CHEBI:29999"/>
        <dbReference type="ChEBI" id="CHEBI:30616"/>
        <dbReference type="ChEBI" id="CHEBI:83421"/>
        <dbReference type="ChEBI" id="CHEBI:456216"/>
        <dbReference type="EC" id="2.7.11.1"/>
    </reaction>
</comment>
<comment type="catalytic activity">
    <reaction evidence="2">
        <text>L-threonyl-[protein] + ATP = O-phospho-L-threonyl-[protein] + ADP + H(+)</text>
        <dbReference type="Rhea" id="RHEA:46608"/>
        <dbReference type="Rhea" id="RHEA-COMP:11060"/>
        <dbReference type="Rhea" id="RHEA-COMP:11605"/>
        <dbReference type="ChEBI" id="CHEBI:15378"/>
        <dbReference type="ChEBI" id="CHEBI:30013"/>
        <dbReference type="ChEBI" id="CHEBI:30616"/>
        <dbReference type="ChEBI" id="CHEBI:61977"/>
        <dbReference type="ChEBI" id="CHEBI:456216"/>
        <dbReference type="EC" id="2.7.11.1"/>
    </reaction>
</comment>
<comment type="cofactor">
    <cofactor evidence="2">
        <name>Mg(2+)</name>
        <dbReference type="ChEBI" id="CHEBI:18420"/>
    </cofactor>
</comment>
<comment type="subunit">
    <text evidence="1">Interacts with the C-terminal of peptidylglycine alpha-amidating monooxygenase (PAM) and with the huntingtin-associated protein 1 (HAP1). Interacts with FASLG (By similarity).</text>
</comment>
<comment type="subcellular location">
    <subcellularLocation>
        <location evidence="2 4">Cytoplasm</location>
    </subcellularLocation>
    <subcellularLocation>
        <location evidence="2 4">Cytoplasm</location>
        <location evidence="2 4">Cytoskeleton</location>
    </subcellularLocation>
</comment>
<comment type="alternative products">
    <event type="alternative splicing"/>
    <event type="alternative initiation"/>
    <isoform>
        <id>A2CG49-1</id>
        <name>1</name>
        <name evidence="4">Kalirin-12A</name>
        <sequence type="displayed"/>
    </isoform>
    <isoform>
        <id>A2CG49-2</id>
        <name>2</name>
        <name evidence="4">Kalirin-9A</name>
        <sequence type="described" ref="VSP_052576 VSP_052579"/>
    </isoform>
    <isoform>
        <id>A2CG49-3</id>
        <name evidence="15">3</name>
        <sequence type="described" ref="VSP_052562"/>
    </isoform>
    <isoform>
        <id>A2CG49-4</id>
        <name evidence="15">4</name>
        <sequence type="described" ref="VSP_052563 VSP_052570 VSP_052571 VSP_052573 VSP_052577 VSP_052578"/>
    </isoform>
    <isoform>
        <id>A2CG49-5</id>
        <name evidence="15">5</name>
        <sequence type="described" ref="VSP_052564 VSP_052567 VSP_052568 VSP_052569"/>
    </isoform>
    <isoform>
        <id>A2CG49-6</id>
        <name evidence="15">6</name>
        <sequence type="described" ref="VSP_052563 VSP_052570 VSP_052573 VSP_052574 VSP_052575"/>
    </isoform>
    <isoform>
        <id>A2CG49-7</id>
        <name evidence="15">7</name>
        <sequence type="described" ref="VSP_052565 VSP_052572"/>
    </isoform>
    <isoform>
        <id>A2CG49-8</id>
        <name evidence="15">8</name>
        <sequence type="described" ref="VSP_052566 VSP_052567 VSP_052568 VSP_052569"/>
    </isoform>
    <isoform>
        <id>A2CG49-9</id>
        <name evidence="15">9</name>
        <name evidence="4">Kalirin-7c</name>
        <sequence type="described" ref="VSP_052566 VSP_052568 VSP_052569"/>
    </isoform>
    <isoform>
        <id>A2CG49-10</id>
        <name>10</name>
        <name evidence="4">Delta Kalirin-7</name>
        <sequence type="described" ref="VSP_052564 VSP_052568 VSP_052569"/>
    </isoform>
</comment>
<comment type="domain">
    <text evidence="4">The two GEF domains catalyze nucleotide exchange for RAC1 and RhoA which are bound by DH1 and DH2 respectively. The two GEF domains appear to play differing roles in neuronal development and axonal outgrowth. SH3 1 binds to the first GEF domain inhibiting GEF activity only when in the presence of a PXXP peptide, suggesting that the SH3 domain/peptide interaction mediates binding to GEF1. CRK1 SH3 domain binds to and inhibits GEF1 activity (By similarity).</text>
</comment>
<comment type="PTM">
    <text evidence="2">Autophosphorylated.</text>
</comment>
<comment type="miscellaneous">
    <molecule>Isoform 1</molecule>
    <text evidence="18">Produced by alternative splicing.</text>
</comment>
<comment type="miscellaneous">
    <molecule>Isoform 2</molecule>
    <text evidence="18">Produced by alternative splicing.</text>
</comment>
<comment type="miscellaneous">
    <molecule>Isoform 3</molecule>
    <text evidence="18">Produced by alternative splicing.</text>
</comment>
<comment type="miscellaneous">
    <molecule>Isoform 4</molecule>
    <text evidence="18">Produced by alternative splicing.</text>
</comment>
<comment type="miscellaneous">
    <molecule>Isoform 5</molecule>
    <text evidence="18">Produced by alternative initiation at Met-624 of isoform 1. Inferred by similarity.</text>
</comment>
<comment type="miscellaneous">
    <molecule>Isoform 6</molecule>
    <text evidence="18">Produced by alternative splicing.</text>
</comment>
<comment type="miscellaneous">
    <molecule>Isoform 7</molecule>
    <text evidence="18">Produced by alternative splicing.</text>
</comment>
<comment type="miscellaneous">
    <molecule>Isoform 8</molecule>
    <text evidence="18">Produced by alternative splicing.</text>
</comment>
<comment type="miscellaneous">
    <molecule>Isoform 9</molecule>
    <text evidence="18">Produced by alternative splicing.</text>
</comment>
<comment type="similarity">
    <text evidence="18">Belongs to the protein kinase superfamily. CAMK Ser/Thr protein kinase family.</text>
</comment>
<proteinExistence type="evidence at protein level"/>
<keyword id="KW-0002">3D-structure</keyword>
<keyword id="KW-0024">Alternative initiation</keyword>
<keyword id="KW-0025">Alternative splicing</keyword>
<keyword id="KW-0067">ATP-binding</keyword>
<keyword id="KW-0963">Cytoplasm</keyword>
<keyword id="KW-0206">Cytoskeleton</keyword>
<keyword id="KW-0903">Direct protein sequencing</keyword>
<keyword id="KW-1015">Disulfide bond</keyword>
<keyword id="KW-0344">Guanine-nucleotide releasing factor</keyword>
<keyword id="KW-0393">Immunoglobulin domain</keyword>
<keyword id="KW-0418">Kinase</keyword>
<keyword id="KW-0460">Magnesium</keyword>
<keyword id="KW-0479">Metal-binding</keyword>
<keyword id="KW-0547">Nucleotide-binding</keyword>
<keyword id="KW-0597">Phosphoprotein</keyword>
<keyword id="KW-1185">Reference proteome</keyword>
<keyword id="KW-0677">Repeat</keyword>
<keyword id="KW-0723">Serine/threonine-protein kinase</keyword>
<keyword id="KW-0728">SH3 domain</keyword>
<keyword id="KW-0808">Transferase</keyword>
<dbReference type="EC" id="2.7.11.1"/>
<dbReference type="EMBL" id="AK008844">
    <property type="protein sequence ID" value="BAB25925.1"/>
    <property type="molecule type" value="mRNA"/>
</dbReference>
<dbReference type="EMBL" id="AK081504">
    <property type="protein sequence ID" value="BAC38239.1"/>
    <property type="molecule type" value="mRNA"/>
</dbReference>
<dbReference type="EMBL" id="AK088732">
    <property type="protein sequence ID" value="BAC40535.1"/>
    <property type="molecule type" value="mRNA"/>
</dbReference>
<dbReference type="EMBL" id="AK139581">
    <property type="protein sequence ID" value="BAE24075.1"/>
    <property type="molecule type" value="mRNA"/>
</dbReference>
<dbReference type="EMBL" id="AK158544">
    <property type="protein sequence ID" value="BAE34552.1"/>
    <property type="molecule type" value="mRNA"/>
</dbReference>
<dbReference type="EMBL" id="AK159031">
    <property type="protein sequence ID" value="BAE34776.1"/>
    <property type="molecule type" value="mRNA"/>
</dbReference>
<dbReference type="EMBL" id="CT010573">
    <property type="protein sequence ID" value="CAM18305.1"/>
    <property type="molecule type" value="Genomic_DNA"/>
</dbReference>
<dbReference type="EMBL" id="AC154524">
    <property type="protein sequence ID" value="CAM18305.1"/>
    <property type="status" value="JOINED"/>
    <property type="molecule type" value="Genomic_DNA"/>
</dbReference>
<dbReference type="EMBL" id="AC155257">
    <property type="protein sequence ID" value="CAM18305.1"/>
    <property type="status" value="JOINED"/>
    <property type="molecule type" value="Genomic_DNA"/>
</dbReference>
<dbReference type="EMBL" id="AC165079">
    <property type="protein sequence ID" value="CAM18305.1"/>
    <property type="status" value="JOINED"/>
    <property type="molecule type" value="Genomic_DNA"/>
</dbReference>
<dbReference type="EMBL" id="CT010573">
    <property type="protein sequence ID" value="CAM18306.1"/>
    <property type="molecule type" value="Genomic_DNA"/>
</dbReference>
<dbReference type="EMBL" id="AC154524">
    <property type="protein sequence ID" value="CAM18306.1"/>
    <property type="status" value="JOINED"/>
    <property type="molecule type" value="Genomic_DNA"/>
</dbReference>
<dbReference type="EMBL" id="AC165079">
    <property type="protein sequence ID" value="CAM18306.1"/>
    <property type="status" value="JOINED"/>
    <property type="molecule type" value="Genomic_DNA"/>
</dbReference>
<dbReference type="EMBL" id="CT010573">
    <property type="protein sequence ID" value="CAM18307.1"/>
    <property type="molecule type" value="Genomic_DNA"/>
</dbReference>
<dbReference type="EMBL" id="AC154524">
    <property type="protein sequence ID" value="CAM18307.1"/>
    <property type="status" value="JOINED"/>
    <property type="molecule type" value="Genomic_DNA"/>
</dbReference>
<dbReference type="EMBL" id="AC154588">
    <property type="protein sequence ID" value="CAM18307.1"/>
    <property type="status" value="JOINED"/>
    <property type="molecule type" value="Genomic_DNA"/>
</dbReference>
<dbReference type="EMBL" id="CT010573">
    <property type="protein sequence ID" value="CAM18308.1"/>
    <property type="molecule type" value="Genomic_DNA"/>
</dbReference>
<dbReference type="EMBL" id="AC154524">
    <property type="protein sequence ID" value="CAM18308.1"/>
    <property type="status" value="JOINED"/>
    <property type="molecule type" value="Genomic_DNA"/>
</dbReference>
<dbReference type="EMBL" id="AC154588">
    <property type="protein sequence ID" value="CAM18308.1"/>
    <property type="status" value="JOINED"/>
    <property type="molecule type" value="Genomic_DNA"/>
</dbReference>
<dbReference type="EMBL" id="CT010573">
    <property type="protein sequence ID" value="CAM18309.1"/>
    <property type="molecule type" value="Genomic_DNA"/>
</dbReference>
<dbReference type="EMBL" id="AC154524">
    <property type="protein sequence ID" value="CAM18309.1"/>
    <property type="status" value="JOINED"/>
    <property type="molecule type" value="Genomic_DNA"/>
</dbReference>
<dbReference type="EMBL" id="AC154588">
    <property type="protein sequence ID" value="CAM18309.1"/>
    <property type="status" value="JOINED"/>
    <property type="molecule type" value="Genomic_DNA"/>
</dbReference>
<dbReference type="EMBL" id="BC157950">
    <property type="protein sequence ID" value="AAI57951.1"/>
    <property type="molecule type" value="mRNA"/>
</dbReference>
<dbReference type="EMBL" id="BC172101">
    <property type="protein sequence ID" value="AAI72101.1"/>
    <property type="molecule type" value="mRNA"/>
</dbReference>
<dbReference type="CCDS" id="CCDS49836.1">
    <molecule id="A2CG49-9"/>
</dbReference>
<dbReference type="RefSeq" id="NP_001157740.1">
    <molecule id="A2CG49-9"/>
    <property type="nucleotide sequence ID" value="NM_001164268.1"/>
</dbReference>
<dbReference type="RefSeq" id="XP_006522445.1">
    <molecule id="A2CG49-8"/>
    <property type="nucleotide sequence ID" value="XM_006522382.5"/>
</dbReference>
<dbReference type="PDB" id="1WFW">
    <property type="method" value="NMR"/>
    <property type="chains" value="A=2295-2354"/>
</dbReference>
<dbReference type="PDB" id="7UR2">
    <property type="method" value="X-ray"/>
    <property type="resolution" value="1.89 A"/>
    <property type="chains" value="A/B/C/D/E/F/G/H=4-172"/>
</dbReference>
<dbReference type="PDBsum" id="1WFW"/>
<dbReference type="PDBsum" id="7UR2"/>
<dbReference type="SMR" id="A2CG49"/>
<dbReference type="BioGRID" id="244011">
    <property type="interactions" value="63"/>
</dbReference>
<dbReference type="FunCoup" id="A2CG49">
    <property type="interactions" value="1095"/>
</dbReference>
<dbReference type="IntAct" id="A2CG49">
    <property type="interactions" value="62"/>
</dbReference>
<dbReference type="MINT" id="A2CG49"/>
<dbReference type="STRING" id="10090.ENSMUSP00000110611"/>
<dbReference type="GlyGen" id="A2CG49">
    <property type="glycosylation" value="4 sites, 2 N-linked glycans (2 sites), 1 O-linked glycan (1 site)"/>
</dbReference>
<dbReference type="iPTMnet" id="A2CG49"/>
<dbReference type="PhosphoSitePlus" id="A2CG49"/>
<dbReference type="SwissPalm" id="A2CG49"/>
<dbReference type="PaxDb" id="10090-ENSMUSP00000110611"/>
<dbReference type="PeptideAtlas" id="A2CG49"/>
<dbReference type="ProteomicsDB" id="301718">
    <molecule id="A2CG49-1"/>
</dbReference>
<dbReference type="ProteomicsDB" id="301719">
    <molecule id="A2CG49-2"/>
</dbReference>
<dbReference type="ProteomicsDB" id="301720">
    <molecule id="A2CG49-3"/>
</dbReference>
<dbReference type="ProteomicsDB" id="301721">
    <molecule id="A2CG49-4"/>
</dbReference>
<dbReference type="ProteomicsDB" id="301722">
    <molecule id="A2CG49-5"/>
</dbReference>
<dbReference type="ProteomicsDB" id="301723">
    <molecule id="A2CG49-6"/>
</dbReference>
<dbReference type="ProteomicsDB" id="301724">
    <molecule id="A2CG49-7"/>
</dbReference>
<dbReference type="ProteomicsDB" id="301725">
    <molecule id="A2CG49-8"/>
</dbReference>
<dbReference type="ProteomicsDB" id="301726">
    <molecule id="A2CG49-9"/>
</dbReference>
<dbReference type="ProteomicsDB" id="301727">
    <molecule id="A2CG49-10"/>
</dbReference>
<dbReference type="Pumba" id="A2CG49"/>
<dbReference type="Antibodypedia" id="2142">
    <property type="antibodies" value="171 antibodies from 33 providers"/>
</dbReference>
<dbReference type="DNASU" id="545156"/>
<dbReference type="Ensembl" id="ENSMUST00000076810.12">
    <molecule id="A2CG49-1"/>
    <property type="protein sequence ID" value="ENSMUSP00000076088.6"/>
    <property type="gene ID" value="ENSMUSG00000061751.17"/>
</dbReference>
<dbReference type="Ensembl" id="ENSMUST00000089655.12">
    <molecule id="A2CG49-8"/>
    <property type="protein sequence ID" value="ENSMUSP00000087084.6"/>
    <property type="gene ID" value="ENSMUSG00000061751.17"/>
</dbReference>
<dbReference type="Ensembl" id="ENSMUST00000114949.8">
    <molecule id="A2CG49-10"/>
    <property type="protein sequence ID" value="ENSMUSP00000110599.2"/>
    <property type="gene ID" value="ENSMUSG00000061751.17"/>
</dbReference>
<dbReference type="Ensembl" id="ENSMUST00000114953.8">
    <molecule id="A2CG49-5"/>
    <property type="protein sequence ID" value="ENSMUSP00000110603.2"/>
    <property type="gene ID" value="ENSMUSG00000061751.17"/>
</dbReference>
<dbReference type="Ensembl" id="ENSMUST00000114954.8">
    <molecule id="A2CG49-5"/>
    <property type="protein sequence ID" value="ENSMUSP00000110604.2"/>
    <property type="gene ID" value="ENSMUSG00000061751.17"/>
</dbReference>
<dbReference type="Ensembl" id="ENSMUST00000114960.9">
    <molecule id="A2CG49-9"/>
    <property type="protein sequence ID" value="ENSMUSP00000110611.3"/>
    <property type="gene ID" value="ENSMUSG00000061751.17"/>
</dbReference>
<dbReference type="Ensembl" id="ENSMUST00000232157.2">
    <molecule id="A2CG49-4"/>
    <property type="protein sequence ID" value="ENSMUSP00000156147.2"/>
    <property type="gene ID" value="ENSMUSG00000061751.17"/>
</dbReference>
<dbReference type="GeneID" id="545156"/>
<dbReference type="KEGG" id="mmu:545156"/>
<dbReference type="UCSC" id="uc007zar.2">
    <molecule id="A2CG49-3"/>
    <property type="organism name" value="mouse"/>
</dbReference>
<dbReference type="UCSC" id="uc007zas.1">
    <molecule id="A2CG49-6"/>
    <property type="organism name" value="mouse"/>
</dbReference>
<dbReference type="UCSC" id="uc007zat.1">
    <molecule id="A2CG49-4"/>
    <property type="organism name" value="mouse"/>
</dbReference>
<dbReference type="UCSC" id="uc007zav.1">
    <molecule id="A2CG49-5"/>
    <property type="organism name" value="mouse"/>
</dbReference>
<dbReference type="UCSC" id="uc007zax.2">
    <molecule id="A2CG49-9"/>
    <property type="organism name" value="mouse"/>
</dbReference>
<dbReference type="UCSC" id="uc012aew.1">
    <molecule id="A2CG49-1"/>
    <property type="organism name" value="mouse"/>
</dbReference>
<dbReference type="AGR" id="MGI:2685385"/>
<dbReference type="CTD" id="8997"/>
<dbReference type="MGI" id="MGI:2685385">
    <property type="gene designation" value="Kalrn"/>
</dbReference>
<dbReference type="VEuPathDB" id="HostDB:ENSMUSG00000061751"/>
<dbReference type="eggNOG" id="KOG4240">
    <property type="taxonomic scope" value="Eukaryota"/>
</dbReference>
<dbReference type="GeneTree" id="ENSGT00940000155248"/>
<dbReference type="InParanoid" id="A2CG49"/>
<dbReference type="OMA" id="AKXFIMA"/>
<dbReference type="OrthoDB" id="10256089at2759"/>
<dbReference type="PhylomeDB" id="A2CG49"/>
<dbReference type="TreeFam" id="TF318080"/>
<dbReference type="Reactome" id="R-MMU-193648">
    <property type="pathway name" value="NRAGE signals death through JNK"/>
</dbReference>
<dbReference type="Reactome" id="R-MMU-3928662">
    <property type="pathway name" value="EPHB-mediated forward signaling"/>
</dbReference>
<dbReference type="Reactome" id="R-MMU-416476">
    <property type="pathway name" value="G alpha (q) signalling events"/>
</dbReference>
<dbReference type="Reactome" id="R-MMU-416482">
    <property type="pathway name" value="G alpha (12/13) signalling events"/>
</dbReference>
<dbReference type="Reactome" id="R-MMU-5687128">
    <property type="pathway name" value="MAPK6/MAPK4 signaling"/>
</dbReference>
<dbReference type="Reactome" id="R-MMU-8980692">
    <property type="pathway name" value="RHOA GTPase cycle"/>
</dbReference>
<dbReference type="Reactome" id="R-MMU-9013149">
    <property type="pathway name" value="RAC1 GTPase cycle"/>
</dbReference>
<dbReference type="Reactome" id="R-MMU-9013408">
    <property type="pathway name" value="RHOG GTPase cycle"/>
</dbReference>
<dbReference type="BioGRID-ORCS" id="545156">
    <property type="hits" value="4 hits in 81 CRISPR screens"/>
</dbReference>
<dbReference type="CD-CODE" id="CE726F99">
    <property type="entry name" value="Postsynaptic density"/>
</dbReference>
<dbReference type="ChiTaRS" id="Kalrn">
    <property type="organism name" value="mouse"/>
</dbReference>
<dbReference type="EvolutionaryTrace" id="A2CG49"/>
<dbReference type="PRO" id="PR:A2CG49"/>
<dbReference type="Proteomes" id="UP000000589">
    <property type="component" value="Chromosome 16"/>
</dbReference>
<dbReference type="RNAct" id="A2CG49">
    <property type="molecule type" value="protein"/>
</dbReference>
<dbReference type="Bgee" id="ENSMUSG00000061751">
    <property type="expression patterns" value="Expressed in cingulate cortex and 248 other cell types or tissues"/>
</dbReference>
<dbReference type="ExpressionAtlas" id="A2CG49">
    <property type="expression patterns" value="baseline and differential"/>
</dbReference>
<dbReference type="GO" id="GO:0005737">
    <property type="term" value="C:cytoplasm"/>
    <property type="evidence" value="ECO:0007669"/>
    <property type="project" value="UniProtKB-SubCell"/>
</dbReference>
<dbReference type="GO" id="GO:0005856">
    <property type="term" value="C:cytoskeleton"/>
    <property type="evidence" value="ECO:0007669"/>
    <property type="project" value="UniProtKB-SubCell"/>
</dbReference>
<dbReference type="GO" id="GO:0005524">
    <property type="term" value="F:ATP binding"/>
    <property type="evidence" value="ECO:0007669"/>
    <property type="project" value="UniProtKB-KW"/>
</dbReference>
<dbReference type="GO" id="GO:0005085">
    <property type="term" value="F:guanyl-nucleotide exchange factor activity"/>
    <property type="evidence" value="ECO:0007669"/>
    <property type="project" value="UniProtKB-KW"/>
</dbReference>
<dbReference type="GO" id="GO:0046872">
    <property type="term" value="F:metal ion binding"/>
    <property type="evidence" value="ECO:0007669"/>
    <property type="project" value="UniProtKB-KW"/>
</dbReference>
<dbReference type="GO" id="GO:0106310">
    <property type="term" value="F:protein serine kinase activity"/>
    <property type="evidence" value="ECO:0007669"/>
    <property type="project" value="RHEA"/>
</dbReference>
<dbReference type="GO" id="GO:0004674">
    <property type="term" value="F:protein serine/threonine kinase activity"/>
    <property type="evidence" value="ECO:0007669"/>
    <property type="project" value="UniProtKB-KW"/>
</dbReference>
<dbReference type="GO" id="GO:0008344">
    <property type="term" value="P:adult locomotory behavior"/>
    <property type="evidence" value="ECO:0000315"/>
    <property type="project" value="MGI"/>
</dbReference>
<dbReference type="GO" id="GO:0046959">
    <property type="term" value="P:habituation"/>
    <property type="evidence" value="ECO:0000315"/>
    <property type="project" value="MGI"/>
</dbReference>
<dbReference type="GO" id="GO:0007595">
    <property type="term" value="P:lactation"/>
    <property type="evidence" value="ECO:0000315"/>
    <property type="project" value="MGI"/>
</dbReference>
<dbReference type="GO" id="GO:0042711">
    <property type="term" value="P:maternal behavior"/>
    <property type="evidence" value="ECO:0000315"/>
    <property type="project" value="MGI"/>
</dbReference>
<dbReference type="GO" id="GO:0060137">
    <property type="term" value="P:maternal process involved in parturition"/>
    <property type="evidence" value="ECO:0000315"/>
    <property type="project" value="MGI"/>
</dbReference>
<dbReference type="GO" id="GO:0007613">
    <property type="term" value="P:memory"/>
    <property type="evidence" value="ECO:0000315"/>
    <property type="project" value="MGI"/>
</dbReference>
<dbReference type="GO" id="GO:0060125">
    <property type="term" value="P:negative regulation of growth hormone secretion"/>
    <property type="evidence" value="ECO:0000315"/>
    <property type="project" value="MGI"/>
</dbReference>
<dbReference type="GO" id="GO:0007528">
    <property type="term" value="P:neuromuscular junction development"/>
    <property type="evidence" value="ECO:0000315"/>
    <property type="project" value="MGI"/>
</dbReference>
<dbReference type="GO" id="GO:0061003">
    <property type="term" value="P:positive regulation of dendritic spine morphogenesis"/>
    <property type="evidence" value="ECO:0000315"/>
    <property type="project" value="MGI"/>
</dbReference>
<dbReference type="GO" id="GO:0035176">
    <property type="term" value="P:social behavior"/>
    <property type="evidence" value="ECO:0000315"/>
    <property type="project" value="MGI"/>
</dbReference>
<dbReference type="CDD" id="cd00063">
    <property type="entry name" value="FN3"/>
    <property type="match status" value="1"/>
</dbReference>
<dbReference type="CDD" id="cd13240">
    <property type="entry name" value="PH1_Kalirin_Trio_like"/>
    <property type="match status" value="1"/>
</dbReference>
<dbReference type="CDD" id="cd13241">
    <property type="entry name" value="PH2_Kalirin_Trio_p63RhoGEF"/>
    <property type="match status" value="1"/>
</dbReference>
<dbReference type="CDD" id="cd00160">
    <property type="entry name" value="RhoGEF"/>
    <property type="match status" value="2"/>
</dbReference>
<dbReference type="CDD" id="cd00170">
    <property type="entry name" value="SEC14"/>
    <property type="match status" value="1"/>
</dbReference>
<dbReference type="CDD" id="cd11852">
    <property type="entry name" value="SH3_Kalirin_1"/>
    <property type="match status" value="1"/>
</dbReference>
<dbReference type="CDD" id="cd11853">
    <property type="entry name" value="SH3_Kalirin_2"/>
    <property type="match status" value="1"/>
</dbReference>
<dbReference type="CDD" id="cd00176">
    <property type="entry name" value="SPEC"/>
    <property type="match status" value="5"/>
</dbReference>
<dbReference type="CDD" id="cd14115">
    <property type="entry name" value="STKc_Kalirin_C"/>
    <property type="match status" value="1"/>
</dbReference>
<dbReference type="FunFam" id="1.20.900.10:FF:000001">
    <property type="entry name" value="Guanine nucleotide exchange factor DBS"/>
    <property type="match status" value="1"/>
</dbReference>
<dbReference type="FunFam" id="1.10.510.10:FF:000152">
    <property type="entry name" value="kalirin isoform X1"/>
    <property type="match status" value="1"/>
</dbReference>
<dbReference type="FunFam" id="2.30.29.30:FF:000091">
    <property type="entry name" value="kalirin isoform X1"/>
    <property type="match status" value="1"/>
</dbReference>
<dbReference type="FunFam" id="2.30.30.40:FF:000038">
    <property type="entry name" value="kalirin isoform X1"/>
    <property type="match status" value="1"/>
</dbReference>
<dbReference type="FunFam" id="2.30.30.40:FF:000040">
    <property type="entry name" value="kalirin isoform X1"/>
    <property type="match status" value="1"/>
</dbReference>
<dbReference type="FunFam" id="2.60.40.10:FF:000325">
    <property type="entry name" value="kalirin isoform X1"/>
    <property type="match status" value="1"/>
</dbReference>
<dbReference type="FunFam" id="2.60.40.10:FF:000368">
    <property type="entry name" value="kalirin isoform X1"/>
    <property type="match status" value="1"/>
</dbReference>
<dbReference type="FunFam" id="3.30.200.20:FF:000169">
    <property type="entry name" value="kalirin isoform X1"/>
    <property type="match status" value="1"/>
</dbReference>
<dbReference type="FunFam" id="1.20.58.60:FF:000034">
    <property type="entry name" value="kalirin isoform X2"/>
    <property type="match status" value="1"/>
</dbReference>
<dbReference type="FunFam" id="3.40.525.10:FF:000003">
    <property type="entry name" value="kalirin isoform X2"/>
    <property type="match status" value="1"/>
</dbReference>
<dbReference type="FunFam" id="1.20.58.60:FF:000024">
    <property type="entry name" value="Kalirin RhoGEF kinase a"/>
    <property type="match status" value="1"/>
</dbReference>
<dbReference type="FunFam" id="1.20.58.60:FF:000023">
    <property type="entry name" value="Kalirin RhoGEF kinase b"/>
    <property type="match status" value="1"/>
</dbReference>
<dbReference type="FunFam" id="1.20.58.60:FF:000032">
    <property type="entry name" value="Kalirin RhoGEF kinase b"/>
    <property type="match status" value="1"/>
</dbReference>
<dbReference type="FunFam" id="2.30.29.30:FF:000040">
    <property type="entry name" value="Kalirin RhoGEF kinase b"/>
    <property type="match status" value="1"/>
</dbReference>
<dbReference type="FunFam" id="1.20.900.10:FF:000008">
    <property type="entry name" value="rho guanine nucleotide exchange factor 25"/>
    <property type="match status" value="1"/>
</dbReference>
<dbReference type="FunFam" id="1.20.58.60:FF:000015">
    <property type="entry name" value="triple functional domain protein-like"/>
    <property type="match status" value="1"/>
</dbReference>
<dbReference type="Gene3D" id="1.20.58.60">
    <property type="match status" value="5"/>
</dbReference>
<dbReference type="Gene3D" id="3.40.525.10">
    <property type="entry name" value="CRAL-TRIO lipid binding domain"/>
    <property type="match status" value="1"/>
</dbReference>
<dbReference type="Gene3D" id="1.20.900.10">
    <property type="entry name" value="Dbl homology (DH) domain"/>
    <property type="match status" value="2"/>
</dbReference>
<dbReference type="Gene3D" id="2.60.40.10">
    <property type="entry name" value="Immunoglobulins"/>
    <property type="match status" value="2"/>
</dbReference>
<dbReference type="Gene3D" id="3.30.200.20">
    <property type="entry name" value="Phosphorylase Kinase, domain 1"/>
    <property type="match status" value="1"/>
</dbReference>
<dbReference type="Gene3D" id="2.30.29.30">
    <property type="entry name" value="Pleckstrin-homology domain (PH domain)/Phosphotyrosine-binding domain (PTB)"/>
    <property type="match status" value="2"/>
</dbReference>
<dbReference type="Gene3D" id="2.30.30.40">
    <property type="entry name" value="SH3 Domains"/>
    <property type="match status" value="2"/>
</dbReference>
<dbReference type="Gene3D" id="1.10.510.10">
    <property type="entry name" value="Transferase(Phosphotransferase) domain 1"/>
    <property type="match status" value="1"/>
</dbReference>
<dbReference type="InterPro" id="IPR001251">
    <property type="entry name" value="CRAL-TRIO_dom"/>
</dbReference>
<dbReference type="InterPro" id="IPR036865">
    <property type="entry name" value="CRAL-TRIO_dom_sf"/>
</dbReference>
<dbReference type="InterPro" id="IPR035899">
    <property type="entry name" value="DBL_dom_sf"/>
</dbReference>
<dbReference type="InterPro" id="IPR000219">
    <property type="entry name" value="DH_dom"/>
</dbReference>
<dbReference type="InterPro" id="IPR003961">
    <property type="entry name" value="FN3_dom"/>
</dbReference>
<dbReference type="InterPro" id="IPR036116">
    <property type="entry name" value="FN3_sf"/>
</dbReference>
<dbReference type="InterPro" id="IPR007110">
    <property type="entry name" value="Ig-like_dom"/>
</dbReference>
<dbReference type="InterPro" id="IPR036179">
    <property type="entry name" value="Ig-like_dom_sf"/>
</dbReference>
<dbReference type="InterPro" id="IPR013783">
    <property type="entry name" value="Ig-like_fold"/>
</dbReference>
<dbReference type="InterPro" id="IPR013098">
    <property type="entry name" value="Ig_I-set"/>
</dbReference>
<dbReference type="InterPro" id="IPR003599">
    <property type="entry name" value="Ig_sub"/>
</dbReference>
<dbReference type="InterPro" id="IPR003598">
    <property type="entry name" value="Ig_sub2"/>
</dbReference>
<dbReference type="InterPro" id="IPR047054">
    <property type="entry name" value="Kalirin_TRIO_PH_1"/>
</dbReference>
<dbReference type="InterPro" id="IPR028570">
    <property type="entry name" value="Kalirin_TRIO_SH3_1"/>
</dbReference>
<dbReference type="InterPro" id="IPR047053">
    <property type="entry name" value="Kalirin_TRIO_SH3_2"/>
</dbReference>
<dbReference type="InterPro" id="IPR011009">
    <property type="entry name" value="Kinase-like_dom_sf"/>
</dbReference>
<dbReference type="InterPro" id="IPR011993">
    <property type="entry name" value="PH-like_dom_sf"/>
</dbReference>
<dbReference type="InterPro" id="IPR001849">
    <property type="entry name" value="PH_domain"/>
</dbReference>
<dbReference type="InterPro" id="IPR000719">
    <property type="entry name" value="Prot_kinase_dom"/>
</dbReference>
<dbReference type="InterPro" id="IPR017441">
    <property type="entry name" value="Protein_kinase_ATP_BS"/>
</dbReference>
<dbReference type="InterPro" id="IPR051336">
    <property type="entry name" value="RhoGEF_Guanine_NuclExch_SF"/>
</dbReference>
<dbReference type="InterPro" id="IPR008271">
    <property type="entry name" value="Ser/Thr_kinase_AS"/>
</dbReference>
<dbReference type="InterPro" id="IPR036028">
    <property type="entry name" value="SH3-like_dom_sf"/>
</dbReference>
<dbReference type="InterPro" id="IPR001452">
    <property type="entry name" value="SH3_domain"/>
</dbReference>
<dbReference type="InterPro" id="IPR055251">
    <property type="entry name" value="SOS1_NGEF_PH"/>
</dbReference>
<dbReference type="InterPro" id="IPR018159">
    <property type="entry name" value="Spectrin/alpha-actinin"/>
</dbReference>
<dbReference type="InterPro" id="IPR002017">
    <property type="entry name" value="Spectrin_repeat"/>
</dbReference>
<dbReference type="PANTHER" id="PTHR22826:SF49">
    <property type="entry name" value="KALIRIN"/>
    <property type="match status" value="1"/>
</dbReference>
<dbReference type="PANTHER" id="PTHR22826">
    <property type="entry name" value="RHO GUANINE EXCHANGE FACTOR-RELATED"/>
    <property type="match status" value="1"/>
</dbReference>
<dbReference type="Pfam" id="PF13716">
    <property type="entry name" value="CRAL_TRIO_2"/>
    <property type="match status" value="1"/>
</dbReference>
<dbReference type="Pfam" id="PF00041">
    <property type="entry name" value="fn3"/>
    <property type="match status" value="1"/>
</dbReference>
<dbReference type="Pfam" id="PF07679">
    <property type="entry name" value="I-set"/>
    <property type="match status" value="1"/>
</dbReference>
<dbReference type="Pfam" id="PF00069">
    <property type="entry name" value="Pkinase"/>
    <property type="match status" value="1"/>
</dbReference>
<dbReference type="Pfam" id="PF00621">
    <property type="entry name" value="RhoGEF"/>
    <property type="match status" value="2"/>
</dbReference>
<dbReference type="Pfam" id="PF16609">
    <property type="entry name" value="SH3-RhoG_link"/>
    <property type="match status" value="1"/>
</dbReference>
<dbReference type="Pfam" id="PF00018">
    <property type="entry name" value="SH3_1"/>
    <property type="match status" value="1"/>
</dbReference>
<dbReference type="Pfam" id="PF23587">
    <property type="entry name" value="SH3_KALRN"/>
    <property type="match status" value="1"/>
</dbReference>
<dbReference type="Pfam" id="PF22697">
    <property type="entry name" value="SOS1_NGEF_PH"/>
    <property type="match status" value="2"/>
</dbReference>
<dbReference type="Pfam" id="PF00435">
    <property type="entry name" value="Spectrin"/>
    <property type="match status" value="4"/>
</dbReference>
<dbReference type="Pfam" id="PF23323">
    <property type="entry name" value="Spectrin_6"/>
    <property type="match status" value="1"/>
</dbReference>
<dbReference type="SMART" id="SM00060">
    <property type="entry name" value="FN3"/>
    <property type="match status" value="1"/>
</dbReference>
<dbReference type="SMART" id="SM00409">
    <property type="entry name" value="IG"/>
    <property type="match status" value="1"/>
</dbReference>
<dbReference type="SMART" id="SM00408">
    <property type="entry name" value="IGc2"/>
    <property type="match status" value="1"/>
</dbReference>
<dbReference type="SMART" id="SM00233">
    <property type="entry name" value="PH"/>
    <property type="match status" value="2"/>
</dbReference>
<dbReference type="SMART" id="SM00325">
    <property type="entry name" value="RhoGEF"/>
    <property type="match status" value="2"/>
</dbReference>
<dbReference type="SMART" id="SM00220">
    <property type="entry name" value="S_TKc"/>
    <property type="match status" value="1"/>
</dbReference>
<dbReference type="SMART" id="SM00516">
    <property type="entry name" value="SEC14"/>
    <property type="match status" value="1"/>
</dbReference>
<dbReference type="SMART" id="SM00326">
    <property type="entry name" value="SH3"/>
    <property type="match status" value="2"/>
</dbReference>
<dbReference type="SMART" id="SM00150">
    <property type="entry name" value="SPEC"/>
    <property type="match status" value="7"/>
</dbReference>
<dbReference type="SUPFAM" id="SSF52087">
    <property type="entry name" value="CRAL/TRIO domain"/>
    <property type="match status" value="1"/>
</dbReference>
<dbReference type="SUPFAM" id="SSF48065">
    <property type="entry name" value="DBL homology domain (DH-domain)"/>
    <property type="match status" value="2"/>
</dbReference>
<dbReference type="SUPFAM" id="SSF49265">
    <property type="entry name" value="Fibronectin type III"/>
    <property type="match status" value="1"/>
</dbReference>
<dbReference type="SUPFAM" id="SSF48726">
    <property type="entry name" value="Immunoglobulin"/>
    <property type="match status" value="1"/>
</dbReference>
<dbReference type="SUPFAM" id="SSF50729">
    <property type="entry name" value="PH domain-like"/>
    <property type="match status" value="2"/>
</dbReference>
<dbReference type="SUPFAM" id="SSF56112">
    <property type="entry name" value="Protein kinase-like (PK-like)"/>
    <property type="match status" value="1"/>
</dbReference>
<dbReference type="SUPFAM" id="SSF50044">
    <property type="entry name" value="SH3-domain"/>
    <property type="match status" value="2"/>
</dbReference>
<dbReference type="SUPFAM" id="SSF46966">
    <property type="entry name" value="Spectrin repeat"/>
    <property type="match status" value="6"/>
</dbReference>
<dbReference type="PROSITE" id="PS50191">
    <property type="entry name" value="CRAL_TRIO"/>
    <property type="match status" value="1"/>
</dbReference>
<dbReference type="PROSITE" id="PS50010">
    <property type="entry name" value="DH_2"/>
    <property type="match status" value="2"/>
</dbReference>
<dbReference type="PROSITE" id="PS50853">
    <property type="entry name" value="FN3"/>
    <property type="match status" value="1"/>
</dbReference>
<dbReference type="PROSITE" id="PS50835">
    <property type="entry name" value="IG_LIKE"/>
    <property type="match status" value="1"/>
</dbReference>
<dbReference type="PROSITE" id="PS50003">
    <property type="entry name" value="PH_DOMAIN"/>
    <property type="match status" value="2"/>
</dbReference>
<dbReference type="PROSITE" id="PS00107">
    <property type="entry name" value="PROTEIN_KINASE_ATP"/>
    <property type="match status" value="1"/>
</dbReference>
<dbReference type="PROSITE" id="PS50011">
    <property type="entry name" value="PROTEIN_KINASE_DOM"/>
    <property type="match status" value="1"/>
</dbReference>
<dbReference type="PROSITE" id="PS00108">
    <property type="entry name" value="PROTEIN_KINASE_ST"/>
    <property type="match status" value="1"/>
</dbReference>
<dbReference type="PROSITE" id="PS50002">
    <property type="entry name" value="SH3"/>
    <property type="match status" value="2"/>
</dbReference>
<feature type="chain" id="PRO_0000308173" description="Kalirin">
    <location>
        <begin position="1"/>
        <end position="2964"/>
    </location>
</feature>
<feature type="domain" description="CRAL-TRIO" evidence="6">
    <location>
        <begin position="17"/>
        <end position="162"/>
    </location>
</feature>
<feature type="repeat" description="Spectrin 1" evidence="5">
    <location>
        <begin position="149"/>
        <end position="290"/>
    </location>
</feature>
<feature type="repeat" description="Spectrin 2" evidence="5">
    <location>
        <begin position="292"/>
        <end position="399"/>
    </location>
</feature>
<feature type="repeat" description="Spectrin 3" evidence="5">
    <location>
        <begin position="400"/>
        <end position="517"/>
    </location>
</feature>
<feature type="repeat" description="Spectrin 4" evidence="5">
    <location>
        <begin position="518"/>
        <end position="621"/>
    </location>
</feature>
<feature type="repeat" description="Spectrin 5" evidence="5">
    <location>
        <begin position="622"/>
        <end position="752"/>
    </location>
</feature>
<feature type="repeat" description="Spectrin 6" evidence="5">
    <location>
        <begin position="753"/>
        <end position="870"/>
    </location>
</feature>
<feature type="repeat" description="Spectrin 7" evidence="5">
    <location>
        <begin position="871"/>
        <end position="977"/>
    </location>
</feature>
<feature type="repeat" description="Spectrin 8" evidence="5">
    <location>
        <begin position="978"/>
        <end position="1101"/>
    </location>
</feature>
<feature type="repeat" description="Spectrin 9" evidence="5">
    <location>
        <begin position="1102"/>
        <end position="1207"/>
    </location>
</feature>
<feature type="domain" description="DH 1" evidence="7">
    <location>
        <begin position="1254"/>
        <end position="1429"/>
    </location>
</feature>
<feature type="domain" description="PH 1" evidence="9">
    <location>
        <begin position="1441"/>
        <end position="1553"/>
    </location>
</feature>
<feature type="domain" description="SH3 1" evidence="11">
    <location>
        <begin position="1619"/>
        <end position="1684"/>
    </location>
</feature>
<feature type="domain" description="DH 2" evidence="7">
    <location>
        <begin position="1900"/>
        <end position="2075"/>
    </location>
</feature>
<feature type="domain" description="PH 2" evidence="9">
    <location>
        <begin position="2087"/>
        <end position="2197"/>
    </location>
</feature>
<feature type="domain" description="SH3 2" evidence="11">
    <location>
        <begin position="2292"/>
        <end position="2357"/>
    </location>
</feature>
<feature type="domain" description="Ig-like C2-type" evidence="5">
    <location>
        <begin position="2443"/>
        <end position="2536"/>
    </location>
</feature>
<feature type="domain" description="Fibronectin type-III" evidence="12">
    <location>
        <begin position="2543"/>
        <end position="2637"/>
    </location>
</feature>
<feature type="domain" description="Protein kinase" evidence="10">
    <location>
        <begin position="2656"/>
        <end position="2910"/>
    </location>
</feature>
<feature type="region of interest" description="Disordered" evidence="14">
    <location>
        <begin position="692"/>
        <end position="717"/>
    </location>
</feature>
<feature type="region of interest" description="Disordered" evidence="14">
    <location>
        <begin position="1568"/>
        <end position="1615"/>
    </location>
</feature>
<feature type="region of interest" description="Disordered" evidence="14">
    <location>
        <begin position="1700"/>
        <end position="1825"/>
    </location>
</feature>
<feature type="region of interest" description="Disordered" evidence="14">
    <location>
        <begin position="1869"/>
        <end position="1888"/>
    </location>
</feature>
<feature type="region of interest" description="Disordered" evidence="14">
    <location>
        <begin position="2215"/>
        <end position="2285"/>
    </location>
</feature>
<feature type="region of interest" description="Disordered" evidence="14">
    <location>
        <begin position="2384"/>
        <end position="2426"/>
    </location>
</feature>
<feature type="compositionally biased region" description="Polar residues" evidence="14">
    <location>
        <begin position="707"/>
        <end position="717"/>
    </location>
</feature>
<feature type="compositionally biased region" description="Polar residues" evidence="14">
    <location>
        <begin position="1592"/>
        <end position="1612"/>
    </location>
</feature>
<feature type="compositionally biased region" description="Polar residues" evidence="14">
    <location>
        <begin position="1701"/>
        <end position="1739"/>
    </location>
</feature>
<feature type="compositionally biased region" description="Basic and acidic residues" evidence="14">
    <location>
        <begin position="1790"/>
        <end position="1799"/>
    </location>
</feature>
<feature type="compositionally biased region" description="Basic and acidic residues" evidence="14">
    <location>
        <begin position="2275"/>
        <end position="2284"/>
    </location>
</feature>
<feature type="compositionally biased region" description="Acidic residues" evidence="14">
    <location>
        <begin position="2415"/>
        <end position="2425"/>
    </location>
</feature>
<feature type="active site" description="Proton acceptor" evidence="3 10 13">
    <location>
        <position position="2775"/>
    </location>
</feature>
<feature type="binding site" evidence="3 10">
    <location>
        <begin position="2662"/>
        <end position="2670"/>
    </location>
    <ligand>
        <name>ATP</name>
        <dbReference type="ChEBI" id="CHEBI:30616"/>
    </ligand>
</feature>
<feature type="binding site" evidence="2 10">
    <location>
        <position position="2685"/>
    </location>
    <ligand>
        <name>ATP</name>
        <dbReference type="ChEBI" id="CHEBI:30616"/>
    </ligand>
</feature>
<feature type="modified residue" description="Phosphoserine" evidence="26 27">
    <location>
        <position position="1722"/>
    </location>
</feature>
<feature type="modified residue" description="Phosphoserine" evidence="2">
    <location>
        <position position="1725"/>
    </location>
</feature>
<feature type="modified residue" description="Phosphoserine" evidence="26 27">
    <location>
        <position position="1771"/>
    </location>
</feature>
<feature type="modified residue" description="Phosphothreonine" evidence="4">
    <location>
        <position position="1784"/>
    </location>
</feature>
<feature type="modified residue" description="Phosphoserine" evidence="27">
    <location>
        <position position="1789"/>
    </location>
</feature>
<feature type="modified residue" description="Phosphothreonine" evidence="27">
    <location>
        <position position="1881"/>
    </location>
</feature>
<feature type="modified residue" description="Phosphothreonine" evidence="27">
    <location>
        <position position="1884"/>
    </location>
</feature>
<feature type="modified residue" description="Phosphoserine" evidence="2">
    <location>
        <position position="2233"/>
    </location>
</feature>
<feature type="disulfide bond" evidence="2 8">
    <location>
        <begin position="2464"/>
        <end position="2520"/>
    </location>
</feature>
<feature type="splice variant" id="VSP_052562" description="In isoform 3." evidence="17">
    <location>
        <begin position="1"/>
        <end position="2731"/>
    </location>
</feature>
<feature type="splice variant" id="VSP_052563" description="In isoform 4 and isoform 6." evidence="17">
    <location>
        <begin position="1"/>
        <end position="1669"/>
    </location>
</feature>
<feature type="splice variant" id="VSP_052564" description="In isoform 5 and isoform 10." evidence="17">
    <location>
        <begin position="1"/>
        <end position="623"/>
    </location>
</feature>
<feature type="splice variant" id="VSP_052565" description="In isoform 7." evidence="17">
    <original>MVLS</original>
    <variation>MNPPEGASEEGGAADSDVDAFFRT</variation>
    <location>
        <begin position="1"/>
        <end position="4"/>
    </location>
</feature>
<feature type="splice variant" id="VSP_052566" description="In isoform 8 and isoform 9." evidence="16 17">
    <original>MVLS</original>
    <variation>MTDRFWDQWYLWYLRLLRLLDR</variation>
    <location>
        <begin position="1"/>
        <end position="4"/>
    </location>
</feature>
<feature type="splice variant" id="VSP_052567" description="In isoform 5 and isoform 8." evidence="17">
    <original>E</original>
    <variation>ESLFHATSLQ</variation>
    <location>
        <position position="923"/>
    </location>
</feature>
<feature type="splice variant" id="VSP_052568" description="In isoform 5, isoform 8, isoform 9 and isoform 10." evidence="16 17">
    <original>LSGGCELTVVLQDFSAGHSS</original>
    <variation>DGNLVPRWHLGPGDPFSTYV</variation>
    <location>
        <begin position="1617"/>
        <end position="1636"/>
    </location>
</feature>
<feature type="splice variant" id="VSP_052569" description="In isoform 5, isoform 8, isoform 9 and isoform 10." evidence="16 17">
    <location>
        <begin position="1637"/>
        <end position="2964"/>
    </location>
</feature>
<feature type="splice variant" id="VSP_052570" description="In isoform 4 and isoform 6." evidence="17">
    <original>QEGLVPSSALCISHSRSSVEMDCFFPLK</original>
    <variation>MKGGDQAYTRGPSLGWLFAKCCCCFPCR</variation>
    <location>
        <begin position="1670"/>
        <end position="1697"/>
    </location>
</feature>
<feature type="splice variant" id="VSP_052571" description="In isoform 4." evidence="17">
    <location>
        <begin position="1828"/>
        <end position="1858"/>
    </location>
</feature>
<feature type="splice variant" id="VSP_052572" description="In isoform 7." evidence="17">
    <original>TLEGGSYRGSLKDPTGCLNEGMTPPTPPRNLEEEQKAKAL</original>
    <variation>VSGHAGGSSELPLTSVWLPGPQPGPRTGLPHPNFTNRNCI</variation>
    <location>
        <begin position="1859"/>
        <end position="1898"/>
    </location>
</feature>
<feature type="splice variant" id="VSP_052573" description="In isoform 4 and isoform 6." evidence="17">
    <location>
        <position position="2285"/>
    </location>
</feature>
<feature type="splice variant" id="VSP_052574" description="In isoform 6." evidence="17">
    <original>KATAAAES</original>
    <variation>QSQSRGRK</variation>
    <location>
        <begin position="2357"/>
        <end position="2364"/>
    </location>
</feature>
<feature type="splice variant" id="VSP_052575" description="In isoform 6." evidence="17">
    <location>
        <begin position="2365"/>
        <end position="2964"/>
    </location>
</feature>
<feature type="splice variant" id="VSP_052576" description="In isoform 2." evidence="17">
    <original>KSCSW</original>
    <variation>TLLKP</variation>
    <location>
        <begin position="2371"/>
        <end position="2375"/>
    </location>
</feature>
<feature type="splice variant" id="VSP_052577" description="In isoform 4." evidence="17">
    <original>SCS</original>
    <variation>EPY</variation>
    <location>
        <begin position="2372"/>
        <end position="2374"/>
    </location>
</feature>
<feature type="splice variant" id="VSP_052578" description="In isoform 4." evidence="17">
    <location>
        <begin position="2375"/>
        <end position="2964"/>
    </location>
</feature>
<feature type="splice variant" id="VSP_052579" description="In isoform 2." evidence="17">
    <location>
        <begin position="2376"/>
        <end position="2964"/>
    </location>
</feature>
<feature type="sequence conflict" description="In Ref. 1; BAC40535." evidence="18" ref="1">
    <original>Q</original>
    <variation>H</variation>
    <location>
        <position position="1824"/>
    </location>
</feature>
<feature type="sequence conflict" description="In Ref. 1; BAB25925." evidence="18" ref="1">
    <original>G</original>
    <variation>S</variation>
    <location>
        <position position="2316"/>
    </location>
</feature>
<feature type="sequence conflict" description="In Ref. 1; BAB25925." evidence="18" ref="1">
    <original>E</original>
    <variation>K</variation>
    <location>
        <position position="2344"/>
    </location>
</feature>
<feature type="sequence conflict" description="In Ref. 1; BAB25925." evidence="18" ref="1">
    <original>L</original>
    <variation>F</variation>
    <location>
        <position position="2355"/>
    </location>
</feature>
<feature type="strand" evidence="28">
    <location>
        <begin position="2296"/>
        <end position="2298"/>
    </location>
</feature>
<feature type="strand" evidence="28">
    <location>
        <begin position="2307"/>
        <end position="2309"/>
    </location>
</feature>
<feature type="strand" evidence="28">
    <location>
        <begin position="2318"/>
        <end position="2324"/>
    </location>
</feature>
<feature type="strand" evidence="28">
    <location>
        <begin position="2328"/>
        <end position="2334"/>
    </location>
</feature>
<feature type="strand" evidence="28">
    <location>
        <begin position="2338"/>
        <end position="2348"/>
    </location>
</feature>
<feature type="helix" evidence="28">
    <location>
        <begin position="2349"/>
        <end position="2351"/>
    </location>
</feature>
<feature type="sequence conflict" description="In Ref. 1; BAE34776." evidence="18" ref="1">
    <original>E</original>
    <variation>K</variation>
    <location sequence="A2CG49-5">
        <position position="711"/>
    </location>
</feature>
<sequence length="2964" mass="337000">MVLSGSFRNDGLKASDVLPILKEKVAFVSGGRDKRGGPILTFPARSNHDRIRQEDLRKLVTYLASVPSEDVCKRGFTVIIDMRGSKWDLIKPLLKTLQEAFPAEIHVALIIKPDNFWQKQKTNFGSSKFIFETSMVSVEGLTKLVDPSQLTEEFDGSLDYNHEEWIELRLSLEEFFNSAVHLLSRLEDLQEMLARKEFPVDVEGSRRLIDEHTQLKKKVLKAPVEELDREGQRLLQCIRCSDGFSGRNCIPGSADFQSLVPKITSLLDKLHSTRQHLHQMWHVRKLKLDQCFQLRLFEQDAEKMFDWISHNKELFLQSHTEIGVSYQHALDLQTQHNHFAMNSMNAYVNINRIMSVASRLSEAGHYASQQIKQISTQLDQEWKSFAAALDERSTILAMSAVFHQKAEQFLSGVDAWCKMCSEGGLPSEMQDLELAIHHHQSLYEQVTQAYTEVSQDGKALLDVLQRPLSPGNSESLTATANYSKAVHQVLDVVHEVLHHQRRLESIWQHRKVRLHQRLQLCVFQQDVQQVLDWIENHGEAFLSKHTGVGKSLHRARALQKRHDDFEEVAQNTYTNADKLLEAAEQLAQTGECDPEEIYKAARHLEVRIQDFVRRVEQRKLLLDMSVSFHTHTKELWTWMEDLQKEVLEDVCADSVDAVQELIKQFQQQQTATLDATLNVIKEGEDLIQQLRSAPPSLGEPTEARDSAMSNNKTPHSSSISHIESVLQQLDDAQVQMEELFHERKIKLDIFLQLRIFEQYTIEVTAELDAWNEDLLRQMNDFNTEDLTLAEQRLQRHTERKLAMNNMTFEVIQQGQDLHQYIMEVQASGIELICEKDLDLAAQVQELLEFLHEKQHELELNAEQTHKRLEQCLQLRHLQAEVKQVLGWIRNGESMLNASLVNASSLSEAEQLQREHEQFQLAIEKTHQSALQVQQKAEALLQAGHYDADAIRECAEKVALHWQQLMLKMEDRLKLVNASVAFYKTSEQVCSVLESLEQEYRRDEDWCGGRDKLGPAAEMDHVIPLLSKHLEQKEAFLKACTLARRNAEVFLKYIHRNNVSMPSVASHTRGPEQQVKAILSELLQRENRVLHFWTLKKRRLDQCQQYVVFERSAKQALDWIQETGEYYLSTHTSTGETTEETQELLKEYGEFRVPAKQTKEKVKLLIQLADSFVEKGHIHATEIRKWVTTVDKHYRDFSLRMGKYRYSLEKALGVNTEDNKDLELDIIPASLSDREVKLRDANHEINEEKRKSARKKEFIMAELLQTEKAYVRDLHECLETYLWEMTSGVEEIPPGILNKEHIIFGNIQEIYDFHNNIFLKELEKYEQLPEDVGHCFVTWADKFQMYVTYCKNKPDSNQLILEHAGTFFDEIQQRHGLANSISSYLIKPVQRVTKYQLLLKELLTCCEEGKGELKDGLEVMLSVPKKANDAMHVSMLEGFDENLDVQGELILQDAFQVWDPKSLIRKGRERHLFLFEISLVFSKEIKDSSGHTKYVYKNKLLTSELGVTEHVEGDPCKFALWSGRTPSSDNKTVLKASNIETKQEWIKNIREVIQERIIHLKGALKEPIQLPKTPAKLRNNSKRDGVEDGDSQGDGSSQPDTISIASRTSQNTVESDKLSGGCELTVVLQDFSAGHSSELSIQVGQTVELLERPSERPGWCLVRTTERSPPQEGLVPSSALCISHSRSSVEMDCFFPLKDSYSHSSSENGGKSESVAHLQSQPSLNSIHSSPGPKRSTNTLKKWLTSPVRRLNSGKADGNIKKQKKVRDGRKSFDLGSPKPGDETTPQGDSADEKSKKGWGEDEPDEESHTPLPPPMKIFDNDPTQDEMSSLLAARQAPPDVPTAADLVSAIEKLVKNKLTLEGGSYRGSLKDPTGCLNEGMTPPTPPRNLEEEQKAKALRGRMFVLNELVQTEKDYVKDLGIVVEGFMKRIEEKGVPEDMRGKEKIVFGNIHQIYDWHKDFFLAELEKCIQEQDRLAQLFIKHERKLHIYVWYCQNKPRSEYIVAEYDAYFEEVKQEINQRLTLSDFLIKPIQRITKYQLLLKDFLRYSEKAGLECSDIEKAVELMCLVPKRCNDMMNLGRLQGFEGTLTAQGKLLQQDTFYVIELDAGMQSRTKERRVFLFEQIVIFSELLRKGSLTPGYMFKRSIKMNYLVLEDNVDGDPCKFALMNRETSERVILQAANSDIQQAWVQDINQVLETQRDFLNALQSPIEYQRKERSTAVIRSQPPRVPQASPRPYSSGPVGSEKPPKGSSYNPPLPPLKISTSNGSPGFDYHQPGDKFDASKQNDLGGCNGTSTMTVIKDYYALKENEICVSQGEVVQVLAVNQQNMCLVYQPASDHSPAAEGWVPGSILAPLAKATAAAESSDGSIKKSCSWHTLRMRKRADVENSGKNEATGPRKPKDILGNKVSVKETNSSEESECDDLDPNTSMEILNPNFIQEVAPEFLVPLVDVTCLLGDTVLLQCKACGRPKPSITWKGPDQNILDTDNSSATYTISSCDSGESTLKICNLMPQDSGIYTCIAANDHGTASTSATVKVQGVPAAPNRPIAQERSCTSVILRWLPPASTGNCTISGYTVEYREEGSQVWQQSVASTLDTYLVIEDLSPGCPYQFRVSASNPWGISLPSEPSEFVRLPEYDAAADGATISWKENFDSAYTELNEIGRGRFSIVKKCIHKATRKDVAVKFVSKKMKKKEQAAHEAALLQHLQHPQYVTLHDTYESPTSYILILELMDDGRLLDYLMNHDELMEEKVAFYIRDIMEALQYLHNCRVAHLDIKPENLLIDLRIPVPRVKLIDLEDAVQISGHFHIHHLLGNPEFAAPEVIQGIPVSLGTDIWSIGVLTYVMLSGVSPFLDESKEETCINVCRVDFSFPHEYFCGVSNAARDFINVILQEDFRRRPTAATCLQHPWLQPHNGSYSKIPLDTSRLACFIERRKHQNDVRPIPNVKSYIVNRVNQGTSLSHNP</sequence>
<evidence type="ECO:0000250" key="1"/>
<evidence type="ECO:0000250" key="2">
    <source>
        <dbReference type="UniProtKB" id="O60229"/>
    </source>
</evidence>
<evidence type="ECO:0000250" key="3">
    <source>
        <dbReference type="UniProtKB" id="P28523"/>
    </source>
</evidence>
<evidence type="ECO:0000250" key="4">
    <source>
        <dbReference type="UniProtKB" id="P97924"/>
    </source>
</evidence>
<evidence type="ECO:0000255" key="5"/>
<evidence type="ECO:0000255" key="6">
    <source>
        <dbReference type="PROSITE-ProRule" id="PRU00056"/>
    </source>
</evidence>
<evidence type="ECO:0000255" key="7">
    <source>
        <dbReference type="PROSITE-ProRule" id="PRU00062"/>
    </source>
</evidence>
<evidence type="ECO:0000255" key="8">
    <source>
        <dbReference type="PROSITE-ProRule" id="PRU00114"/>
    </source>
</evidence>
<evidence type="ECO:0000255" key="9">
    <source>
        <dbReference type="PROSITE-ProRule" id="PRU00145"/>
    </source>
</evidence>
<evidence type="ECO:0000255" key="10">
    <source>
        <dbReference type="PROSITE-ProRule" id="PRU00159"/>
    </source>
</evidence>
<evidence type="ECO:0000255" key="11">
    <source>
        <dbReference type="PROSITE-ProRule" id="PRU00192"/>
    </source>
</evidence>
<evidence type="ECO:0000255" key="12">
    <source>
        <dbReference type="PROSITE-ProRule" id="PRU00316"/>
    </source>
</evidence>
<evidence type="ECO:0000255" key="13">
    <source>
        <dbReference type="PROSITE-ProRule" id="PRU10027"/>
    </source>
</evidence>
<evidence type="ECO:0000256" key="14">
    <source>
        <dbReference type="SAM" id="MobiDB-lite"/>
    </source>
</evidence>
<evidence type="ECO:0000269" key="15">
    <source>
    </source>
</evidence>
<evidence type="ECO:0000303" key="16">
    <source>
    </source>
</evidence>
<evidence type="ECO:0000303" key="17">
    <source>
    </source>
</evidence>
<evidence type="ECO:0000305" key="18"/>
<evidence type="ECO:0000312" key="19">
    <source>
        <dbReference type="EMBL" id="BAB25925.1"/>
    </source>
</evidence>
<evidence type="ECO:0000312" key="20">
    <source>
        <dbReference type="EMBL" id="BAC38239.1"/>
    </source>
</evidence>
<evidence type="ECO:0000312" key="21">
    <source>
        <dbReference type="EMBL" id="BAC40535.1"/>
    </source>
</evidence>
<evidence type="ECO:0000312" key="22">
    <source>
        <dbReference type="EMBL" id="BAE24075.1"/>
    </source>
</evidence>
<evidence type="ECO:0000312" key="23">
    <source>
        <dbReference type="EMBL" id="BAE34552.1"/>
    </source>
</evidence>
<evidence type="ECO:0000312" key="24">
    <source>
        <dbReference type="EMBL" id="CAM18305.1"/>
    </source>
</evidence>
<evidence type="ECO:0000312" key="25">
    <source>
        <dbReference type="MGI" id="MGI:2685385"/>
    </source>
</evidence>
<evidence type="ECO:0007744" key="26">
    <source>
    </source>
</evidence>
<evidence type="ECO:0007744" key="27">
    <source>
    </source>
</evidence>
<evidence type="ECO:0007829" key="28">
    <source>
        <dbReference type="PDB" id="1WFW"/>
    </source>
</evidence>